<reference key="1">
    <citation type="journal article" date="2005" name="Science">
        <title>The transcriptional landscape of the mammalian genome.</title>
        <authorList>
            <person name="Carninci P."/>
            <person name="Kasukawa T."/>
            <person name="Katayama S."/>
            <person name="Gough J."/>
            <person name="Frith M.C."/>
            <person name="Maeda N."/>
            <person name="Oyama R."/>
            <person name="Ravasi T."/>
            <person name="Lenhard B."/>
            <person name="Wells C."/>
            <person name="Kodzius R."/>
            <person name="Shimokawa K."/>
            <person name="Bajic V.B."/>
            <person name="Brenner S.E."/>
            <person name="Batalov S."/>
            <person name="Forrest A.R."/>
            <person name="Zavolan M."/>
            <person name="Davis M.J."/>
            <person name="Wilming L.G."/>
            <person name="Aidinis V."/>
            <person name="Allen J.E."/>
            <person name="Ambesi-Impiombato A."/>
            <person name="Apweiler R."/>
            <person name="Aturaliya R.N."/>
            <person name="Bailey T.L."/>
            <person name="Bansal M."/>
            <person name="Baxter L."/>
            <person name="Beisel K.W."/>
            <person name="Bersano T."/>
            <person name="Bono H."/>
            <person name="Chalk A.M."/>
            <person name="Chiu K.P."/>
            <person name="Choudhary V."/>
            <person name="Christoffels A."/>
            <person name="Clutterbuck D.R."/>
            <person name="Crowe M.L."/>
            <person name="Dalla E."/>
            <person name="Dalrymple B.P."/>
            <person name="de Bono B."/>
            <person name="Della Gatta G."/>
            <person name="di Bernardo D."/>
            <person name="Down T."/>
            <person name="Engstrom P."/>
            <person name="Fagiolini M."/>
            <person name="Faulkner G."/>
            <person name="Fletcher C.F."/>
            <person name="Fukushima T."/>
            <person name="Furuno M."/>
            <person name="Futaki S."/>
            <person name="Gariboldi M."/>
            <person name="Georgii-Hemming P."/>
            <person name="Gingeras T.R."/>
            <person name="Gojobori T."/>
            <person name="Green R.E."/>
            <person name="Gustincich S."/>
            <person name="Harbers M."/>
            <person name="Hayashi Y."/>
            <person name="Hensch T.K."/>
            <person name="Hirokawa N."/>
            <person name="Hill D."/>
            <person name="Huminiecki L."/>
            <person name="Iacono M."/>
            <person name="Ikeo K."/>
            <person name="Iwama A."/>
            <person name="Ishikawa T."/>
            <person name="Jakt M."/>
            <person name="Kanapin A."/>
            <person name="Katoh M."/>
            <person name="Kawasawa Y."/>
            <person name="Kelso J."/>
            <person name="Kitamura H."/>
            <person name="Kitano H."/>
            <person name="Kollias G."/>
            <person name="Krishnan S.P."/>
            <person name="Kruger A."/>
            <person name="Kummerfeld S.K."/>
            <person name="Kurochkin I.V."/>
            <person name="Lareau L.F."/>
            <person name="Lazarevic D."/>
            <person name="Lipovich L."/>
            <person name="Liu J."/>
            <person name="Liuni S."/>
            <person name="McWilliam S."/>
            <person name="Madan Babu M."/>
            <person name="Madera M."/>
            <person name="Marchionni L."/>
            <person name="Matsuda H."/>
            <person name="Matsuzawa S."/>
            <person name="Miki H."/>
            <person name="Mignone F."/>
            <person name="Miyake S."/>
            <person name="Morris K."/>
            <person name="Mottagui-Tabar S."/>
            <person name="Mulder N."/>
            <person name="Nakano N."/>
            <person name="Nakauchi H."/>
            <person name="Ng P."/>
            <person name="Nilsson R."/>
            <person name="Nishiguchi S."/>
            <person name="Nishikawa S."/>
            <person name="Nori F."/>
            <person name="Ohara O."/>
            <person name="Okazaki Y."/>
            <person name="Orlando V."/>
            <person name="Pang K.C."/>
            <person name="Pavan W.J."/>
            <person name="Pavesi G."/>
            <person name="Pesole G."/>
            <person name="Petrovsky N."/>
            <person name="Piazza S."/>
            <person name="Reed J."/>
            <person name="Reid J.F."/>
            <person name="Ring B.Z."/>
            <person name="Ringwald M."/>
            <person name="Rost B."/>
            <person name="Ruan Y."/>
            <person name="Salzberg S.L."/>
            <person name="Sandelin A."/>
            <person name="Schneider C."/>
            <person name="Schoenbach C."/>
            <person name="Sekiguchi K."/>
            <person name="Semple C.A."/>
            <person name="Seno S."/>
            <person name="Sessa L."/>
            <person name="Sheng Y."/>
            <person name="Shibata Y."/>
            <person name="Shimada H."/>
            <person name="Shimada K."/>
            <person name="Silva D."/>
            <person name="Sinclair B."/>
            <person name="Sperling S."/>
            <person name="Stupka E."/>
            <person name="Sugiura K."/>
            <person name="Sultana R."/>
            <person name="Takenaka Y."/>
            <person name="Taki K."/>
            <person name="Tammoja K."/>
            <person name="Tan S.L."/>
            <person name="Tang S."/>
            <person name="Taylor M.S."/>
            <person name="Tegner J."/>
            <person name="Teichmann S.A."/>
            <person name="Ueda H.R."/>
            <person name="van Nimwegen E."/>
            <person name="Verardo R."/>
            <person name="Wei C.L."/>
            <person name="Yagi K."/>
            <person name="Yamanishi H."/>
            <person name="Zabarovsky E."/>
            <person name="Zhu S."/>
            <person name="Zimmer A."/>
            <person name="Hide W."/>
            <person name="Bult C."/>
            <person name="Grimmond S.M."/>
            <person name="Teasdale R.D."/>
            <person name="Liu E.T."/>
            <person name="Brusic V."/>
            <person name="Quackenbush J."/>
            <person name="Wahlestedt C."/>
            <person name="Mattick J.S."/>
            <person name="Hume D.A."/>
            <person name="Kai C."/>
            <person name="Sasaki D."/>
            <person name="Tomaru Y."/>
            <person name="Fukuda S."/>
            <person name="Kanamori-Katayama M."/>
            <person name="Suzuki M."/>
            <person name="Aoki J."/>
            <person name="Arakawa T."/>
            <person name="Iida J."/>
            <person name="Imamura K."/>
            <person name="Itoh M."/>
            <person name="Kato T."/>
            <person name="Kawaji H."/>
            <person name="Kawagashira N."/>
            <person name="Kawashima T."/>
            <person name="Kojima M."/>
            <person name="Kondo S."/>
            <person name="Konno H."/>
            <person name="Nakano K."/>
            <person name="Ninomiya N."/>
            <person name="Nishio T."/>
            <person name="Okada M."/>
            <person name="Plessy C."/>
            <person name="Shibata K."/>
            <person name="Shiraki T."/>
            <person name="Suzuki S."/>
            <person name="Tagami M."/>
            <person name="Waki K."/>
            <person name="Watahiki A."/>
            <person name="Okamura-Oho Y."/>
            <person name="Suzuki H."/>
            <person name="Kawai J."/>
            <person name="Hayashizaki Y."/>
        </authorList>
    </citation>
    <scope>NUCLEOTIDE SEQUENCE [LARGE SCALE MRNA] (ISOFORMS 1 AND 2)</scope>
    <source>
        <strain>C57BL/6J</strain>
        <tissue>Bone marrow</tissue>
        <tissue>Cerebellum</tissue>
        <tissue>Medulla oblongata</tissue>
    </source>
</reference>
<reference key="2">
    <citation type="journal article" date="2010" name="Cell">
        <title>A tissue-specific atlas of mouse protein phosphorylation and expression.</title>
        <authorList>
            <person name="Huttlin E.L."/>
            <person name="Jedrychowski M.P."/>
            <person name="Elias J.E."/>
            <person name="Goswami T."/>
            <person name="Rad R."/>
            <person name="Beausoleil S.A."/>
            <person name="Villen J."/>
            <person name="Haas W."/>
            <person name="Sowa M.E."/>
            <person name="Gygi S.P."/>
        </authorList>
    </citation>
    <scope>IDENTIFICATION BY MASS SPECTROMETRY [LARGE SCALE ANALYSIS]</scope>
    <source>
        <tissue>Brain</tissue>
        <tissue>Testis</tissue>
    </source>
</reference>
<reference key="3">
    <citation type="journal article" date="2016" name="Sci. Adv.">
        <title>A C9ORF72/SMCR8-containing complex regulates ULK1 and plays a dual role in autophagy.</title>
        <authorList>
            <person name="Yang M."/>
            <person name="Liang C."/>
            <person name="Swaminathan K."/>
            <person name="Herrlinger S."/>
            <person name="Lai F."/>
            <person name="Shiekhattar R."/>
            <person name="Chen J.F."/>
        </authorList>
    </citation>
    <scope>SUBCELLULAR LOCATION</scope>
</reference>
<comment type="function">
    <text evidence="1">Non-catalytic component of the C9orf72-SMCR8 complex, a complex that has guanine nucleotide exchange factor (GEF) activity and regulates autophagy. The C9orf72-SMCR8 complex promotes the exchange of GDP to GTP, converting inactive GDP-bound RAB8A and RAB39B into their active GTP-bound form, thereby promoting autophagosome maturation. As part of the C9orf72-SMCR8 complex, stimulates RAB8A and RAB11A GTPase activity in vitro, however WDR42 is shown not be an essential complex component for this function (By similarity). The C9orf72-SMCR8 complex also acts as a negative regulator of autophagy initiation by interacting with the ULK1/ATG1 kinase complex and inhibiting its protein kinase activity.</text>
</comment>
<comment type="subunit">
    <text evidence="1">Component of the C9orf72-SMCR8 complex, at least composed of C9orf72, SMCR8 and WDR41. The complex is formed of two protomers, each individually consisting of one molecule each of C9orf72, SMCR8 and WDR41 (By similarity). The protomers homodimerize via an interaction between C9orf72 (via C-terminus) and SMCR8 (via N-terminus) (By similarity). Within each protomer SMCR8 (via DENN domain) acts as a bridging protein between WDR41 (via C-terminus and N-terminus) and C9orf72 (via C-terminus) (By similarity). The C9orf72-SMCR8 complex associates with the ULK1/ATG1 kinase complex.</text>
</comment>
<comment type="subcellular location">
    <subcellularLocation>
        <location evidence="2">Cytoplasm</location>
    </subcellularLocation>
</comment>
<comment type="alternative products">
    <event type="alternative splicing"/>
    <isoform>
        <id>Q3UDP0-1</id>
        <name>1</name>
        <sequence type="displayed"/>
    </isoform>
    <isoform>
        <id>Q3UDP0-2</id>
        <name>2</name>
        <sequence type="described" ref="VSP_016182 VSP_016183"/>
    </isoform>
</comment>
<sequence>MLRWLIGGGREPQGLAEKAALQTIGEDQGQNPYTELLVLEAHRDIVRFLVRLDDFRFASAGDDGIIVVWNAQTGEKLLELRGHTQKITAVIAFPPLDSCEASSQLLLTASADRTVGVWDCDTGRQIQRVTCFQSTVKCLTVLQRLDIWLSGGSDLGVWNRKLDLLCKTSHLSDTGISALVEIPGNCVAAAVGRELIIFRLVTPTEELPEWDIIEVKRLLDHQDNILSLANINDTGFVTGSHVGELLIWDALDWTVQACERTFWSPTAQLDAQQEIKLFQKQNDISINHFTCDEENIFAAVGRGLYVYNLQLKRVIACQKTAHDSNILHIDKLPNRQLISCSEDGAVRMWEVREKQQLAAEPVPTGFFNMWGFGRVNKQASQPVKKQEENVTTCSLELIGDLIGHSSSVEMFLYFEDHGLVTCSADHLIILWKNGERESGVRSLKLFQKLEENGDLYPESP</sequence>
<organism>
    <name type="scientific">Mus musculus</name>
    <name type="common">Mouse</name>
    <dbReference type="NCBI Taxonomy" id="10090"/>
    <lineage>
        <taxon>Eukaryota</taxon>
        <taxon>Metazoa</taxon>
        <taxon>Chordata</taxon>
        <taxon>Craniata</taxon>
        <taxon>Vertebrata</taxon>
        <taxon>Euteleostomi</taxon>
        <taxon>Mammalia</taxon>
        <taxon>Eutheria</taxon>
        <taxon>Euarchontoglires</taxon>
        <taxon>Glires</taxon>
        <taxon>Rodentia</taxon>
        <taxon>Myomorpha</taxon>
        <taxon>Muroidea</taxon>
        <taxon>Muridae</taxon>
        <taxon>Murinae</taxon>
        <taxon>Mus</taxon>
        <taxon>Mus</taxon>
    </lineage>
</organism>
<name>WDR41_MOUSE</name>
<protein>
    <recommendedName>
        <fullName evidence="4">WD repeat-containing protein 41</fullName>
    </recommendedName>
</protein>
<keyword id="KW-0025">Alternative splicing</keyword>
<keyword id="KW-0072">Autophagy</keyword>
<keyword id="KW-0963">Cytoplasm</keyword>
<keyword id="KW-1185">Reference proteome</keyword>
<keyword id="KW-0677">Repeat</keyword>
<keyword id="KW-0853">WD repeat</keyword>
<evidence type="ECO:0000250" key="1">
    <source>
        <dbReference type="UniProtKB" id="Q9HAD4"/>
    </source>
</evidence>
<evidence type="ECO:0000269" key="2">
    <source>
    </source>
</evidence>
<evidence type="ECO:0000303" key="3">
    <source>
    </source>
</evidence>
<evidence type="ECO:0000305" key="4"/>
<evidence type="ECO:0000312" key="5">
    <source>
        <dbReference type="MGI" id="MGI:2445123"/>
    </source>
</evidence>
<accession>Q3UDP0</accession>
<accession>Q8C4F1</accession>
<accession>Q8C8K5</accession>
<dbReference type="EMBL" id="AK046853">
    <property type="protein sequence ID" value="BAC32897.1"/>
    <property type="molecule type" value="mRNA"/>
</dbReference>
<dbReference type="EMBL" id="AK082348">
    <property type="protein sequence ID" value="BAC38474.1"/>
    <property type="molecule type" value="mRNA"/>
</dbReference>
<dbReference type="EMBL" id="AK149993">
    <property type="protein sequence ID" value="BAE29221.1"/>
    <property type="molecule type" value="mRNA"/>
</dbReference>
<dbReference type="CCDS" id="CCDS56896.2">
    <molecule id="Q3UDP0-1"/>
</dbReference>
<dbReference type="RefSeq" id="NP_766178.2">
    <molecule id="Q3UDP0-1"/>
    <property type="nucleotide sequence ID" value="NM_172590.4"/>
</dbReference>
<dbReference type="RefSeq" id="XP_017170980.1">
    <property type="nucleotide sequence ID" value="XM_017315491.1"/>
</dbReference>
<dbReference type="RefSeq" id="XP_036013908.1">
    <molecule id="Q3UDP0-1"/>
    <property type="nucleotide sequence ID" value="XM_036158015.1"/>
</dbReference>
<dbReference type="SMR" id="Q3UDP0"/>
<dbReference type="BioGRID" id="230033">
    <property type="interactions" value="4"/>
</dbReference>
<dbReference type="ComplexPortal" id="CPX-3962">
    <property type="entry name" value="C9orf72-SMCR8 complex"/>
</dbReference>
<dbReference type="FunCoup" id="Q3UDP0">
    <property type="interactions" value="1322"/>
</dbReference>
<dbReference type="IntAct" id="Q3UDP0">
    <property type="interactions" value="2"/>
</dbReference>
<dbReference type="MINT" id="Q3UDP0"/>
<dbReference type="STRING" id="10090.ENSMUSP00000124033"/>
<dbReference type="iPTMnet" id="Q3UDP0"/>
<dbReference type="PhosphoSitePlus" id="Q3UDP0"/>
<dbReference type="SwissPalm" id="Q3UDP0"/>
<dbReference type="PaxDb" id="10090-ENSMUSP00000138543"/>
<dbReference type="PeptideAtlas" id="Q3UDP0"/>
<dbReference type="ProteomicsDB" id="297648">
    <molecule id="Q3UDP0-1"/>
</dbReference>
<dbReference type="ProteomicsDB" id="297649">
    <molecule id="Q3UDP0-2"/>
</dbReference>
<dbReference type="Pumba" id="Q3UDP0"/>
<dbReference type="Antibodypedia" id="24490">
    <property type="antibodies" value="96 antibodies from 18 providers"/>
</dbReference>
<dbReference type="DNASU" id="218460"/>
<dbReference type="Ensembl" id="ENSMUST00000160801.8">
    <molecule id="Q3UDP0-1"/>
    <property type="protein sequence ID" value="ENSMUSP00000124033.2"/>
    <property type="gene ID" value="ENSMUSG00000042015.19"/>
</dbReference>
<dbReference type="GeneID" id="218460"/>
<dbReference type="KEGG" id="mmu:218460"/>
<dbReference type="UCSC" id="uc033gmt.1">
    <molecule id="Q3UDP0-1"/>
    <property type="organism name" value="mouse"/>
</dbReference>
<dbReference type="AGR" id="MGI:2445123"/>
<dbReference type="CTD" id="55255"/>
<dbReference type="MGI" id="MGI:2445123">
    <property type="gene designation" value="Wdr41"/>
</dbReference>
<dbReference type="VEuPathDB" id="HostDB:ENSMUSG00000042015"/>
<dbReference type="eggNOG" id="ENOG502QURA">
    <property type="taxonomic scope" value="Eukaryota"/>
</dbReference>
<dbReference type="GeneTree" id="ENSGT00390000017026"/>
<dbReference type="HOGENOM" id="CLU_047570_0_0_1"/>
<dbReference type="InParanoid" id="Q3UDP0"/>
<dbReference type="OMA" id="VCLWNAQ"/>
<dbReference type="PhylomeDB" id="Q3UDP0"/>
<dbReference type="TreeFam" id="TF332914"/>
<dbReference type="BioGRID-ORCS" id="218460">
    <property type="hits" value="2 hits in 76 CRISPR screens"/>
</dbReference>
<dbReference type="ChiTaRS" id="Wdr41">
    <property type="organism name" value="mouse"/>
</dbReference>
<dbReference type="PRO" id="PR:Q3UDP0"/>
<dbReference type="Proteomes" id="UP000000589">
    <property type="component" value="Chromosome 13"/>
</dbReference>
<dbReference type="RNAct" id="Q3UDP0">
    <property type="molecule type" value="protein"/>
</dbReference>
<dbReference type="Bgee" id="ENSMUSG00000042015">
    <property type="expression patterns" value="Expressed in interventricular septum and 224 other cell types or tissues"/>
</dbReference>
<dbReference type="ExpressionAtlas" id="Q3UDP0">
    <property type="expression patterns" value="baseline and differential"/>
</dbReference>
<dbReference type="GO" id="GO:0005737">
    <property type="term" value="C:cytoplasm"/>
    <property type="evidence" value="ECO:0000314"/>
    <property type="project" value="UniProtKB"/>
</dbReference>
<dbReference type="GO" id="GO:0032045">
    <property type="term" value="C:guanyl-nucleotide exchange factor complex"/>
    <property type="evidence" value="ECO:0000266"/>
    <property type="project" value="ComplexPortal"/>
</dbReference>
<dbReference type="GO" id="GO:0005096">
    <property type="term" value="F:GTPase activator activity"/>
    <property type="evidence" value="ECO:0007669"/>
    <property type="project" value="Ensembl"/>
</dbReference>
<dbReference type="GO" id="GO:0005085">
    <property type="term" value="F:guanyl-nucleotide exchange factor activity"/>
    <property type="evidence" value="ECO:0007669"/>
    <property type="project" value="Ensembl"/>
</dbReference>
<dbReference type="GO" id="GO:0006914">
    <property type="term" value="P:autophagy"/>
    <property type="evidence" value="ECO:0007669"/>
    <property type="project" value="UniProtKB-KW"/>
</dbReference>
<dbReference type="GO" id="GO:0045920">
    <property type="term" value="P:negative regulation of exocytosis"/>
    <property type="evidence" value="ECO:0000303"/>
    <property type="project" value="ComplexPortal"/>
</dbReference>
<dbReference type="GO" id="GO:0050777">
    <property type="term" value="P:negative regulation of immune response"/>
    <property type="evidence" value="ECO:0000303"/>
    <property type="project" value="ComplexPortal"/>
</dbReference>
<dbReference type="GO" id="GO:0010506">
    <property type="term" value="P:regulation of autophagy"/>
    <property type="evidence" value="ECO:0000250"/>
    <property type="project" value="UniProtKB"/>
</dbReference>
<dbReference type="FunFam" id="2.130.10.10:FF:000564">
    <property type="entry name" value="WD repeat domain 41"/>
    <property type="match status" value="1"/>
</dbReference>
<dbReference type="Gene3D" id="2.130.10.10">
    <property type="entry name" value="YVTN repeat-like/Quinoprotein amine dehydrogenase"/>
    <property type="match status" value="2"/>
</dbReference>
<dbReference type="InterPro" id="IPR020472">
    <property type="entry name" value="G-protein_beta_WD-40_rep"/>
</dbReference>
<dbReference type="InterPro" id="IPR015943">
    <property type="entry name" value="WD40/YVTN_repeat-like_dom_sf"/>
</dbReference>
<dbReference type="InterPro" id="IPR019775">
    <property type="entry name" value="WD40_repeat_CS"/>
</dbReference>
<dbReference type="InterPro" id="IPR036322">
    <property type="entry name" value="WD40_repeat_dom_sf"/>
</dbReference>
<dbReference type="InterPro" id="IPR001680">
    <property type="entry name" value="WD40_rpt"/>
</dbReference>
<dbReference type="InterPro" id="IPR040102">
    <property type="entry name" value="WDR41"/>
</dbReference>
<dbReference type="PANTHER" id="PTHR22805:SF2">
    <property type="entry name" value="WD REPEAT-CONTAINING PROTEIN 41"/>
    <property type="match status" value="1"/>
</dbReference>
<dbReference type="PANTHER" id="PTHR22805">
    <property type="entry name" value="WDR41-RELATED"/>
    <property type="match status" value="1"/>
</dbReference>
<dbReference type="Pfam" id="PF25178">
    <property type="entry name" value="Beta-prop_WDR41"/>
    <property type="match status" value="1"/>
</dbReference>
<dbReference type="PRINTS" id="PR00320">
    <property type="entry name" value="GPROTEINBRPT"/>
</dbReference>
<dbReference type="SMART" id="SM00320">
    <property type="entry name" value="WD40"/>
    <property type="match status" value="6"/>
</dbReference>
<dbReference type="SUPFAM" id="SSF50978">
    <property type="entry name" value="WD40 repeat-like"/>
    <property type="match status" value="1"/>
</dbReference>
<dbReference type="PROSITE" id="PS00678">
    <property type="entry name" value="WD_REPEATS_1"/>
    <property type="match status" value="2"/>
</dbReference>
<dbReference type="PROSITE" id="PS50082">
    <property type="entry name" value="WD_REPEATS_2"/>
    <property type="match status" value="3"/>
</dbReference>
<dbReference type="PROSITE" id="PS50294">
    <property type="entry name" value="WD_REPEATS_REGION"/>
    <property type="match status" value="2"/>
</dbReference>
<gene>
    <name evidence="5" type="primary">Wdr41</name>
</gene>
<feature type="chain" id="PRO_0000051391" description="WD repeat-containing protein 41">
    <location>
        <begin position="1"/>
        <end position="460"/>
    </location>
</feature>
<feature type="repeat" description="WD 1">
    <location>
        <begin position="40"/>
        <end position="79"/>
    </location>
</feature>
<feature type="repeat" description="WD 2">
    <location>
        <begin position="82"/>
        <end position="128"/>
    </location>
</feature>
<feature type="repeat" description="WD 3">
    <location>
        <begin position="131"/>
        <end position="168"/>
    </location>
</feature>
<feature type="repeat" description="WD 4">
    <location>
        <begin position="220"/>
        <end position="258"/>
    </location>
</feature>
<feature type="repeat" description="WD 5">
    <location>
        <begin position="321"/>
        <end position="359"/>
    </location>
</feature>
<feature type="repeat" description="WD 6">
    <location>
        <begin position="403"/>
        <end position="441"/>
    </location>
</feature>
<feature type="splice variant" id="VSP_016182" description="In isoform 2." evidence="3">
    <original>DTGFVTGSHVGELLIWDALDWTVQACERTFWSPTAQLDAQQEIKLFQKQNDISINHFTCDEENIFAAVGRGLYVYN</original>
    <variation>GSVLTMGSVLTTGSVLTIGSVLTTGSVLTMGSVLTTGSAADRRLCADHGLCADRRLCADHGLCADCRRLCCPQALC</variation>
    <location>
        <begin position="233"/>
        <end position="308"/>
    </location>
</feature>
<feature type="splice variant" id="VSP_016183" description="In isoform 2." evidence="3">
    <location>
        <begin position="309"/>
        <end position="460"/>
    </location>
</feature>
<feature type="sequence conflict" description="In Ref. 1; BAC32897." evidence="4" ref="1">
    <original>T</original>
    <variation>K</variation>
    <location>
        <position position="135"/>
    </location>
</feature>
<proteinExistence type="evidence at protein level"/>